<sequence length="271" mass="30035">MPELPEVEVCRLGISPHVIAQEVSEVIIRNKRLRWPIPDEVCSAVGLPVLKVERRAKYLLLRFSTGTLLLHLGMSGTIRVIEQDTPVAKHDHFDLVFKHGKSLRLNDPRRFGAVLWLANDEDELGLLAKLGPEPLSDDFAEGYLFSKAKNRKVPIKTFLMNNHVVVGVGNIYANEALFQAGILPTAKAKDIDEHRMNSLTAIIKKVLSAAIAQGGTTLKDFTQADGRPGYFAQSLMVYGRAGEACVTCKTKLQEIRQSNRSSVFCPSCQQD</sequence>
<protein>
    <recommendedName>
        <fullName evidence="2">Formamidopyrimidine-DNA glycosylase</fullName>
        <shortName evidence="2">Fapy-DNA glycosylase</shortName>
        <ecNumber evidence="2">3.2.2.23</ecNumber>
    </recommendedName>
    <alternativeName>
        <fullName evidence="2">DNA-(apurinic or apyrimidinic site) lyase MutM</fullName>
        <shortName evidence="2">AP lyase MutM</shortName>
        <ecNumber evidence="2">4.2.99.18</ecNumber>
    </alternativeName>
</protein>
<comment type="function">
    <text evidence="2">Involved in base excision repair of DNA damaged by oxidation or by mutagenic agents. Acts as a DNA glycosylase that recognizes and removes damaged bases. Has a preference for oxidized purines, such as 7,8-dihydro-8-oxoguanine (8-oxoG). Has AP (apurinic/apyrimidinic) lyase activity and introduces nicks in the DNA strand. Cleaves the DNA backbone by beta-delta elimination to generate a single-strand break at the site of the removed base with both 3'- and 5'-phosphates.</text>
</comment>
<comment type="catalytic activity">
    <reaction evidence="2">
        <text>Hydrolysis of DNA containing ring-opened 7-methylguanine residues, releasing 2,6-diamino-4-hydroxy-5-(N-methyl)formamidopyrimidine.</text>
        <dbReference type="EC" id="3.2.2.23"/>
    </reaction>
</comment>
<comment type="catalytic activity">
    <reaction evidence="2">
        <text>2'-deoxyribonucleotide-(2'-deoxyribose 5'-phosphate)-2'-deoxyribonucleotide-DNA = a 3'-end 2'-deoxyribonucleotide-(2,3-dehydro-2,3-deoxyribose 5'-phosphate)-DNA + a 5'-end 5'-phospho-2'-deoxyribonucleoside-DNA + H(+)</text>
        <dbReference type="Rhea" id="RHEA:66592"/>
        <dbReference type="Rhea" id="RHEA-COMP:13180"/>
        <dbReference type="Rhea" id="RHEA-COMP:16897"/>
        <dbReference type="Rhea" id="RHEA-COMP:17067"/>
        <dbReference type="ChEBI" id="CHEBI:15378"/>
        <dbReference type="ChEBI" id="CHEBI:136412"/>
        <dbReference type="ChEBI" id="CHEBI:157695"/>
        <dbReference type="ChEBI" id="CHEBI:167181"/>
        <dbReference type="EC" id="4.2.99.18"/>
    </reaction>
</comment>
<comment type="cofactor">
    <cofactor evidence="2">
        <name>Zn(2+)</name>
        <dbReference type="ChEBI" id="CHEBI:29105"/>
    </cofactor>
    <text evidence="2">Binds 1 zinc ion per subunit.</text>
</comment>
<comment type="subunit">
    <text evidence="2">Monomer.</text>
</comment>
<comment type="similarity">
    <text evidence="2">Belongs to the FPG family.</text>
</comment>
<evidence type="ECO:0000250" key="1"/>
<evidence type="ECO:0000255" key="2">
    <source>
        <dbReference type="HAMAP-Rule" id="MF_00103"/>
    </source>
</evidence>
<keyword id="KW-0227">DNA damage</keyword>
<keyword id="KW-0234">DNA repair</keyword>
<keyword id="KW-0238">DNA-binding</keyword>
<keyword id="KW-0326">Glycosidase</keyword>
<keyword id="KW-0378">Hydrolase</keyword>
<keyword id="KW-0456">Lyase</keyword>
<keyword id="KW-0479">Metal-binding</keyword>
<keyword id="KW-0511">Multifunctional enzyme</keyword>
<keyword id="KW-0862">Zinc</keyword>
<keyword id="KW-0863">Zinc-finger</keyword>
<feature type="initiator methionine" description="Removed" evidence="1">
    <location>
        <position position="1"/>
    </location>
</feature>
<feature type="chain" id="PRO_0000228426" description="Formamidopyrimidine-DNA glycosylase">
    <location>
        <begin position="2"/>
        <end position="271"/>
    </location>
</feature>
<feature type="zinc finger region" description="FPG-type" evidence="2">
    <location>
        <begin position="236"/>
        <end position="270"/>
    </location>
</feature>
<feature type="active site" description="Schiff-base intermediate with DNA" evidence="2">
    <location>
        <position position="2"/>
    </location>
</feature>
<feature type="active site" description="Proton donor" evidence="2">
    <location>
        <position position="3"/>
    </location>
</feature>
<feature type="active site" description="Proton donor; for beta-elimination activity" evidence="2">
    <location>
        <position position="57"/>
    </location>
</feature>
<feature type="active site" description="Proton donor; for delta-elimination activity" evidence="2">
    <location>
        <position position="260"/>
    </location>
</feature>
<feature type="binding site" evidence="2">
    <location>
        <position position="90"/>
    </location>
    <ligand>
        <name>DNA</name>
        <dbReference type="ChEBI" id="CHEBI:16991"/>
    </ligand>
</feature>
<feature type="binding site" evidence="2">
    <location>
        <position position="109"/>
    </location>
    <ligand>
        <name>DNA</name>
        <dbReference type="ChEBI" id="CHEBI:16991"/>
    </ligand>
</feature>
<feature type="binding site" evidence="2">
    <location>
        <position position="151"/>
    </location>
    <ligand>
        <name>DNA</name>
        <dbReference type="ChEBI" id="CHEBI:16991"/>
    </ligand>
</feature>
<proteinExistence type="inferred from homology"/>
<accession>Q48AD4</accession>
<name>FPG_COLP3</name>
<reference key="1">
    <citation type="journal article" date="2005" name="Proc. Natl. Acad. Sci. U.S.A.">
        <title>The psychrophilic lifestyle as revealed by the genome sequence of Colwellia psychrerythraea 34H through genomic and proteomic analyses.</title>
        <authorList>
            <person name="Methe B.A."/>
            <person name="Nelson K.E."/>
            <person name="Deming J.W."/>
            <person name="Momen B."/>
            <person name="Melamud E."/>
            <person name="Zhang X."/>
            <person name="Moult J."/>
            <person name="Madupu R."/>
            <person name="Nelson W.C."/>
            <person name="Dodson R.J."/>
            <person name="Brinkac L.M."/>
            <person name="Daugherty S.C."/>
            <person name="Durkin A.S."/>
            <person name="DeBoy R.T."/>
            <person name="Kolonay J.F."/>
            <person name="Sullivan S.A."/>
            <person name="Zhou L."/>
            <person name="Davidsen T.M."/>
            <person name="Wu M."/>
            <person name="Huston A.L."/>
            <person name="Lewis M."/>
            <person name="Weaver B."/>
            <person name="Weidman J.F."/>
            <person name="Khouri H."/>
            <person name="Utterback T.R."/>
            <person name="Feldblyum T.V."/>
            <person name="Fraser C.M."/>
        </authorList>
    </citation>
    <scope>NUCLEOTIDE SEQUENCE [LARGE SCALE GENOMIC DNA]</scope>
    <source>
        <strain>34H / ATCC BAA-681</strain>
    </source>
</reference>
<gene>
    <name evidence="2" type="primary">mutM</name>
    <name evidence="2" type="synonym">fpg</name>
    <name type="ordered locus">CPS_0212</name>
</gene>
<dbReference type="EC" id="3.2.2.23" evidence="2"/>
<dbReference type="EC" id="4.2.99.18" evidence="2"/>
<dbReference type="EMBL" id="CP000083">
    <property type="protein sequence ID" value="AAZ26060.1"/>
    <property type="molecule type" value="Genomic_DNA"/>
</dbReference>
<dbReference type="RefSeq" id="WP_011041086.1">
    <property type="nucleotide sequence ID" value="NC_003910.7"/>
</dbReference>
<dbReference type="SMR" id="Q48AD4"/>
<dbReference type="STRING" id="167879.CPS_0212"/>
<dbReference type="KEGG" id="cps:CPS_0212"/>
<dbReference type="eggNOG" id="COG0266">
    <property type="taxonomic scope" value="Bacteria"/>
</dbReference>
<dbReference type="HOGENOM" id="CLU_038423_1_1_6"/>
<dbReference type="Proteomes" id="UP000000547">
    <property type="component" value="Chromosome"/>
</dbReference>
<dbReference type="GO" id="GO:0034039">
    <property type="term" value="F:8-oxo-7,8-dihydroguanine DNA N-glycosylase activity"/>
    <property type="evidence" value="ECO:0007669"/>
    <property type="project" value="TreeGrafter"/>
</dbReference>
<dbReference type="GO" id="GO:0140078">
    <property type="term" value="F:class I DNA-(apurinic or apyrimidinic site) endonuclease activity"/>
    <property type="evidence" value="ECO:0007669"/>
    <property type="project" value="UniProtKB-EC"/>
</dbReference>
<dbReference type="GO" id="GO:0003684">
    <property type="term" value="F:damaged DNA binding"/>
    <property type="evidence" value="ECO:0007669"/>
    <property type="project" value="InterPro"/>
</dbReference>
<dbReference type="GO" id="GO:0008270">
    <property type="term" value="F:zinc ion binding"/>
    <property type="evidence" value="ECO:0007669"/>
    <property type="project" value="UniProtKB-UniRule"/>
</dbReference>
<dbReference type="GO" id="GO:0006284">
    <property type="term" value="P:base-excision repair"/>
    <property type="evidence" value="ECO:0007669"/>
    <property type="project" value="InterPro"/>
</dbReference>
<dbReference type="CDD" id="cd08966">
    <property type="entry name" value="EcFpg-like_N"/>
    <property type="match status" value="1"/>
</dbReference>
<dbReference type="FunFam" id="1.10.8.50:FF:000003">
    <property type="entry name" value="Formamidopyrimidine-DNA glycosylase"/>
    <property type="match status" value="1"/>
</dbReference>
<dbReference type="FunFam" id="3.20.190.10:FF:000001">
    <property type="entry name" value="Formamidopyrimidine-DNA glycosylase"/>
    <property type="match status" value="1"/>
</dbReference>
<dbReference type="Gene3D" id="1.10.8.50">
    <property type="match status" value="1"/>
</dbReference>
<dbReference type="Gene3D" id="3.20.190.10">
    <property type="entry name" value="MutM-like, N-terminal"/>
    <property type="match status" value="1"/>
</dbReference>
<dbReference type="HAMAP" id="MF_00103">
    <property type="entry name" value="Fapy_DNA_glycosyl"/>
    <property type="match status" value="1"/>
</dbReference>
<dbReference type="InterPro" id="IPR015886">
    <property type="entry name" value="DNA_glyclase/AP_lyase_DNA-bd"/>
</dbReference>
<dbReference type="InterPro" id="IPR015887">
    <property type="entry name" value="DNA_glyclase_Znf_dom_DNA_BS"/>
</dbReference>
<dbReference type="InterPro" id="IPR020629">
    <property type="entry name" value="Formamido-pyr_DNA_Glyclase"/>
</dbReference>
<dbReference type="InterPro" id="IPR012319">
    <property type="entry name" value="FPG_cat"/>
</dbReference>
<dbReference type="InterPro" id="IPR035937">
    <property type="entry name" value="MutM-like_N-ter"/>
</dbReference>
<dbReference type="InterPro" id="IPR010979">
    <property type="entry name" value="Ribosomal_uS13-like_H2TH"/>
</dbReference>
<dbReference type="InterPro" id="IPR000214">
    <property type="entry name" value="Znf_DNA_glyclase/AP_lyase"/>
</dbReference>
<dbReference type="InterPro" id="IPR010663">
    <property type="entry name" value="Znf_FPG/IleRS"/>
</dbReference>
<dbReference type="NCBIfam" id="TIGR00577">
    <property type="entry name" value="fpg"/>
    <property type="match status" value="1"/>
</dbReference>
<dbReference type="NCBIfam" id="NF002211">
    <property type="entry name" value="PRK01103.1"/>
    <property type="match status" value="1"/>
</dbReference>
<dbReference type="PANTHER" id="PTHR22993">
    <property type="entry name" value="FORMAMIDOPYRIMIDINE-DNA GLYCOSYLASE"/>
    <property type="match status" value="1"/>
</dbReference>
<dbReference type="PANTHER" id="PTHR22993:SF9">
    <property type="entry name" value="FORMAMIDOPYRIMIDINE-DNA GLYCOSYLASE"/>
    <property type="match status" value="1"/>
</dbReference>
<dbReference type="Pfam" id="PF01149">
    <property type="entry name" value="Fapy_DNA_glyco"/>
    <property type="match status" value="1"/>
</dbReference>
<dbReference type="Pfam" id="PF06831">
    <property type="entry name" value="H2TH"/>
    <property type="match status" value="1"/>
</dbReference>
<dbReference type="Pfam" id="PF06827">
    <property type="entry name" value="zf-FPG_IleRS"/>
    <property type="match status" value="1"/>
</dbReference>
<dbReference type="SMART" id="SM00898">
    <property type="entry name" value="Fapy_DNA_glyco"/>
    <property type="match status" value="1"/>
</dbReference>
<dbReference type="SMART" id="SM01232">
    <property type="entry name" value="H2TH"/>
    <property type="match status" value="1"/>
</dbReference>
<dbReference type="SUPFAM" id="SSF57716">
    <property type="entry name" value="Glucocorticoid receptor-like (DNA-binding domain)"/>
    <property type="match status" value="1"/>
</dbReference>
<dbReference type="SUPFAM" id="SSF81624">
    <property type="entry name" value="N-terminal domain of MutM-like DNA repair proteins"/>
    <property type="match status" value="1"/>
</dbReference>
<dbReference type="SUPFAM" id="SSF46946">
    <property type="entry name" value="S13-like H2TH domain"/>
    <property type="match status" value="1"/>
</dbReference>
<dbReference type="PROSITE" id="PS51068">
    <property type="entry name" value="FPG_CAT"/>
    <property type="match status" value="1"/>
</dbReference>
<dbReference type="PROSITE" id="PS01242">
    <property type="entry name" value="ZF_FPG_1"/>
    <property type="match status" value="1"/>
</dbReference>
<dbReference type="PROSITE" id="PS51066">
    <property type="entry name" value="ZF_FPG_2"/>
    <property type="match status" value="1"/>
</dbReference>
<organism>
    <name type="scientific">Colwellia psychrerythraea (strain 34H / ATCC BAA-681)</name>
    <name type="common">Vibrio psychroerythus</name>
    <dbReference type="NCBI Taxonomy" id="167879"/>
    <lineage>
        <taxon>Bacteria</taxon>
        <taxon>Pseudomonadati</taxon>
        <taxon>Pseudomonadota</taxon>
        <taxon>Gammaproteobacteria</taxon>
        <taxon>Alteromonadales</taxon>
        <taxon>Colwelliaceae</taxon>
        <taxon>Colwellia</taxon>
    </lineage>
</organism>